<gene>
    <name type="primary">msrB</name>
    <name type="synonym">yeaA</name>
    <name type="ordered locus">b1778</name>
    <name type="ordered locus">JW1767</name>
</gene>
<accession>P0A746</accession>
<accession>P39903</accession>
<accession>P76232</accession>
<accession>P76912</accession>
<comment type="catalytic activity">
    <reaction evidence="2">
        <text>L-methionyl-[protein] + [thioredoxin]-disulfide + H2O = L-methionyl-(R)-S-oxide-[protein] + [thioredoxin]-dithiol</text>
        <dbReference type="Rhea" id="RHEA:24164"/>
        <dbReference type="Rhea" id="RHEA-COMP:10698"/>
        <dbReference type="Rhea" id="RHEA-COMP:10700"/>
        <dbReference type="Rhea" id="RHEA-COMP:12313"/>
        <dbReference type="Rhea" id="RHEA-COMP:12314"/>
        <dbReference type="ChEBI" id="CHEBI:15377"/>
        <dbReference type="ChEBI" id="CHEBI:16044"/>
        <dbReference type="ChEBI" id="CHEBI:29950"/>
        <dbReference type="ChEBI" id="CHEBI:45764"/>
        <dbReference type="ChEBI" id="CHEBI:50058"/>
        <dbReference type="EC" id="1.8.4.12"/>
    </reaction>
</comment>
<comment type="cofactor">
    <cofactor evidence="2">
        <name>Zn(2+)</name>
        <dbReference type="ChEBI" id="CHEBI:29105"/>
    </cofactor>
    <text evidence="2">Binds 1 zinc ion per subunit. The zinc ion is important for the structural integrity of the protein.</text>
</comment>
<comment type="mass spectrometry"/>
<comment type="similarity">
    <text evidence="3">Belongs to the MsrB Met sulfoxide reductase family.</text>
</comment>
<comment type="sequence caution" evidence="3">
    <conflict type="frameshift">
        <sequence resource="EMBL" id="X02662"/>
    </conflict>
</comment>
<protein>
    <recommendedName>
        <fullName>Peptide methionine sulfoxide reductase MsrB</fullName>
        <ecNumber>1.8.4.12</ecNumber>
    </recommendedName>
    <alternativeName>
        <fullName>Peptide-methionine (R)-S-oxide reductase</fullName>
    </alternativeName>
</protein>
<reference key="1">
    <citation type="journal article" date="1996" name="DNA Res.">
        <title>A 570-kb DNA sequence of the Escherichia coli K-12 genome corresponding to the 28.0-40.1 min region on the linkage map.</title>
        <authorList>
            <person name="Aiba H."/>
            <person name="Baba T."/>
            <person name="Fujita K."/>
            <person name="Hayashi K."/>
            <person name="Inada T."/>
            <person name="Isono K."/>
            <person name="Itoh T."/>
            <person name="Kasai H."/>
            <person name="Kashimoto K."/>
            <person name="Kimura S."/>
            <person name="Kitakawa M."/>
            <person name="Kitagawa M."/>
            <person name="Makino K."/>
            <person name="Miki T."/>
            <person name="Mizobuchi K."/>
            <person name="Mori H."/>
            <person name="Mori T."/>
            <person name="Motomura K."/>
            <person name="Nakade S."/>
            <person name="Nakamura Y."/>
            <person name="Nashimoto H."/>
            <person name="Nishio Y."/>
            <person name="Oshima T."/>
            <person name="Saito N."/>
            <person name="Sampei G."/>
            <person name="Seki Y."/>
            <person name="Sivasundaram S."/>
            <person name="Tagami H."/>
            <person name="Takeda J."/>
            <person name="Takemoto K."/>
            <person name="Takeuchi Y."/>
            <person name="Wada C."/>
            <person name="Yamamoto Y."/>
            <person name="Horiuchi T."/>
        </authorList>
    </citation>
    <scope>NUCLEOTIDE SEQUENCE [LARGE SCALE GENOMIC DNA]</scope>
    <source>
        <strain>K12 / W3110 / ATCC 27325 / DSM 5911</strain>
    </source>
</reference>
<reference key="2">
    <citation type="journal article" date="1997" name="Science">
        <title>The complete genome sequence of Escherichia coli K-12.</title>
        <authorList>
            <person name="Blattner F.R."/>
            <person name="Plunkett G. III"/>
            <person name="Bloch C.A."/>
            <person name="Perna N.T."/>
            <person name="Burland V."/>
            <person name="Riley M."/>
            <person name="Collado-Vides J."/>
            <person name="Glasner J.D."/>
            <person name="Rode C.K."/>
            <person name="Mayhew G.F."/>
            <person name="Gregor J."/>
            <person name="Davis N.W."/>
            <person name="Kirkpatrick H.A."/>
            <person name="Goeden M.A."/>
            <person name="Rose D.J."/>
            <person name="Mau B."/>
            <person name="Shao Y."/>
        </authorList>
    </citation>
    <scope>NUCLEOTIDE SEQUENCE [LARGE SCALE GENOMIC DNA]</scope>
    <source>
        <strain>K12 / MG1655 / ATCC 47076</strain>
    </source>
</reference>
<reference key="3">
    <citation type="journal article" date="2006" name="Mol. Syst. Biol.">
        <title>Highly accurate genome sequences of Escherichia coli K-12 strains MG1655 and W3110.</title>
        <authorList>
            <person name="Hayashi K."/>
            <person name="Morooka N."/>
            <person name="Yamamoto Y."/>
            <person name="Fujita K."/>
            <person name="Isono K."/>
            <person name="Choi S."/>
            <person name="Ohtsubo E."/>
            <person name="Baba T."/>
            <person name="Wanner B.L."/>
            <person name="Mori H."/>
            <person name="Horiuchi T."/>
        </authorList>
    </citation>
    <scope>NUCLEOTIDE SEQUENCE [LARGE SCALE GENOMIC DNA]</scope>
    <source>
        <strain>K12 / W3110 / ATCC 27325 / DSM 5911</strain>
    </source>
</reference>
<reference key="4">
    <citation type="journal article" date="1985" name="Eur. J. Biochem.">
        <title>Nucleotide sequence of the Escherichia coli gap gene. Different evolutionary behavior of the NAD+-binding domain and of the catalytic domain of D-glyceraldehyde-3-phosphate dehydrogenase.</title>
        <authorList>
            <person name="Branlant G."/>
            <person name="Branlant C."/>
        </authorList>
    </citation>
    <scope>NUCLEOTIDE SEQUENCE [GENOMIC DNA] OF 1-48</scope>
</reference>
<reference key="5">
    <citation type="journal article" date="1994" name="Nucleic Acids Res.">
        <title>Intrinsic and extrinsic approaches for detecting genes in a bacterial genome.</title>
        <authorList>
            <person name="Borodovsky M."/>
            <person name="Rudd K.E."/>
            <person name="Koonin E.V."/>
        </authorList>
    </citation>
    <scope>IDENTIFICATION</scope>
</reference>
<reference key="6">
    <citation type="journal article" date="2001" name="J. Biol. Chem.">
        <title>Repair of oxidized proteins. Identification of a new methionine sulfoxide reductase.</title>
        <authorList>
            <person name="Grimaud R."/>
            <person name="Ezraty B."/>
            <person name="Mitchell J.K."/>
            <person name="Lafitte D."/>
            <person name="Briand C."/>
            <person name="Derrick P.J."/>
            <person name="Barras F."/>
        </authorList>
    </citation>
    <scope>FUNCTION</scope>
    <source>
        <strain>K12 / MG1655 / ATCC 47076</strain>
    </source>
</reference>
<reference key="7">
    <citation type="journal article" date="2005" name="Protein Sci.">
        <title>Insights into the role of the metal binding site in methionine-R-sulfoxide reductases B.</title>
        <authorList>
            <person name="Olry A."/>
            <person name="Boschi-Muller S."/>
            <person name="Yu H."/>
            <person name="Burnel D."/>
            <person name="Branlant G."/>
        </authorList>
    </citation>
    <scope>CATALYTIC ACTIVITY</scope>
    <scope>COFACTOR</scope>
    <scope>MASS SPECTROMETRY</scope>
    <scope>MUTAGENESIS OF CYS-46; CYS-49; CYS-95 AND CYS-98</scope>
    <source>
        <strain>K12</strain>
    </source>
</reference>
<dbReference type="EC" id="1.8.4.12"/>
<dbReference type="EMBL" id="U00096">
    <property type="protein sequence ID" value="AAC74848.1"/>
    <property type="molecule type" value="Genomic_DNA"/>
</dbReference>
<dbReference type="EMBL" id="AP009048">
    <property type="protein sequence ID" value="BAA15575.2"/>
    <property type="molecule type" value="Genomic_DNA"/>
</dbReference>
<dbReference type="EMBL" id="X02662">
    <property type="status" value="NOT_ANNOTATED_CDS"/>
    <property type="molecule type" value="Genomic_DNA"/>
</dbReference>
<dbReference type="PIR" id="B64938">
    <property type="entry name" value="B64938"/>
</dbReference>
<dbReference type="RefSeq" id="NP_416292.1">
    <property type="nucleotide sequence ID" value="NC_000913.3"/>
</dbReference>
<dbReference type="RefSeq" id="WP_001284618.1">
    <property type="nucleotide sequence ID" value="NZ_SSZK01000001.1"/>
</dbReference>
<dbReference type="PDB" id="6SYM">
    <property type="method" value="X-ray"/>
    <property type="resolution" value="1.63 A"/>
    <property type="chains" value="A/B=1-137"/>
</dbReference>
<dbReference type="PDBsum" id="6SYM"/>
<dbReference type="SMR" id="P0A746"/>
<dbReference type="BioGRID" id="4260307">
    <property type="interactions" value="54"/>
</dbReference>
<dbReference type="BioGRID" id="851520">
    <property type="interactions" value="1"/>
</dbReference>
<dbReference type="DIP" id="DIP-48167N"/>
<dbReference type="FunCoup" id="P0A746">
    <property type="interactions" value="721"/>
</dbReference>
<dbReference type="IntAct" id="P0A746">
    <property type="interactions" value="4"/>
</dbReference>
<dbReference type="STRING" id="511145.b1778"/>
<dbReference type="jPOST" id="P0A746"/>
<dbReference type="PaxDb" id="511145-b1778"/>
<dbReference type="DNASU" id="947188"/>
<dbReference type="EnsemblBacteria" id="AAC74848">
    <property type="protein sequence ID" value="AAC74848"/>
    <property type="gene ID" value="b1778"/>
</dbReference>
<dbReference type="GeneID" id="93775987"/>
<dbReference type="GeneID" id="947188"/>
<dbReference type="KEGG" id="ecj:JW1767"/>
<dbReference type="KEGG" id="eco:b1778"/>
<dbReference type="KEGG" id="ecoc:C3026_10145"/>
<dbReference type="PATRIC" id="fig|1411691.4.peg.476"/>
<dbReference type="EchoBASE" id="EB2295"/>
<dbReference type="eggNOG" id="COG0229">
    <property type="taxonomic scope" value="Bacteria"/>
</dbReference>
<dbReference type="HOGENOM" id="CLU_031040_8_5_6"/>
<dbReference type="InParanoid" id="P0A746"/>
<dbReference type="OMA" id="YDETTDW"/>
<dbReference type="OrthoDB" id="9785497at2"/>
<dbReference type="PhylomeDB" id="P0A746"/>
<dbReference type="BioCyc" id="EcoCyc:EG12394-MONOMER"/>
<dbReference type="BioCyc" id="MetaCyc:EG12394-MONOMER"/>
<dbReference type="BRENDA" id="1.8.4.12">
    <property type="organism ID" value="2026"/>
</dbReference>
<dbReference type="PRO" id="PR:P0A746"/>
<dbReference type="Proteomes" id="UP000000625">
    <property type="component" value="Chromosome"/>
</dbReference>
<dbReference type="GO" id="GO:0005737">
    <property type="term" value="C:cytoplasm"/>
    <property type="evidence" value="ECO:0000318"/>
    <property type="project" value="GO_Central"/>
</dbReference>
<dbReference type="GO" id="GO:0005829">
    <property type="term" value="C:cytosol"/>
    <property type="evidence" value="ECO:0000314"/>
    <property type="project" value="EcoCyc"/>
</dbReference>
<dbReference type="GO" id="GO:0005506">
    <property type="term" value="F:iron ion binding"/>
    <property type="evidence" value="ECO:0000314"/>
    <property type="project" value="EcoliWiki"/>
</dbReference>
<dbReference type="GO" id="GO:0033745">
    <property type="term" value="F:L-methionine-(R)-S-oxide reductase activity"/>
    <property type="evidence" value="ECO:0000314"/>
    <property type="project" value="EcoCyc"/>
</dbReference>
<dbReference type="GO" id="GO:0033743">
    <property type="term" value="F:peptide-methionine (R)-S-oxide reductase activity"/>
    <property type="evidence" value="ECO:0000314"/>
    <property type="project" value="EcoCyc"/>
</dbReference>
<dbReference type="GO" id="GO:0008270">
    <property type="term" value="F:zinc ion binding"/>
    <property type="evidence" value="ECO:0000314"/>
    <property type="project" value="EcoliWiki"/>
</dbReference>
<dbReference type="GO" id="GO:0030091">
    <property type="term" value="P:protein repair"/>
    <property type="evidence" value="ECO:0000314"/>
    <property type="project" value="EcoCyc"/>
</dbReference>
<dbReference type="GO" id="GO:0046686">
    <property type="term" value="P:response to cadmium ion"/>
    <property type="evidence" value="ECO:0000315"/>
    <property type="project" value="EcoCyc"/>
</dbReference>
<dbReference type="GO" id="GO:0006979">
    <property type="term" value="P:response to oxidative stress"/>
    <property type="evidence" value="ECO:0000316"/>
    <property type="project" value="EcoCyc"/>
</dbReference>
<dbReference type="FunFam" id="2.170.150.20:FF:000001">
    <property type="entry name" value="Peptide methionine sulfoxide reductase MsrB"/>
    <property type="match status" value="1"/>
</dbReference>
<dbReference type="Gene3D" id="2.170.150.20">
    <property type="entry name" value="Peptide methionine sulfoxide reductase"/>
    <property type="match status" value="1"/>
</dbReference>
<dbReference type="HAMAP" id="MF_01400">
    <property type="entry name" value="MsrB"/>
    <property type="match status" value="1"/>
</dbReference>
<dbReference type="InterPro" id="IPR028427">
    <property type="entry name" value="Met_Sox_Rdtase_MsrB"/>
</dbReference>
<dbReference type="InterPro" id="IPR002579">
    <property type="entry name" value="Met_Sox_Rdtase_MsrB_dom"/>
</dbReference>
<dbReference type="InterPro" id="IPR011057">
    <property type="entry name" value="Mss4-like_sf"/>
</dbReference>
<dbReference type="NCBIfam" id="TIGR00357">
    <property type="entry name" value="peptide-methionine (R)-S-oxide reductase MsrB"/>
    <property type="match status" value="1"/>
</dbReference>
<dbReference type="PANTHER" id="PTHR10173">
    <property type="entry name" value="METHIONINE SULFOXIDE REDUCTASE"/>
    <property type="match status" value="1"/>
</dbReference>
<dbReference type="PANTHER" id="PTHR10173:SF52">
    <property type="entry name" value="METHIONINE-R-SULFOXIDE REDUCTASE B1"/>
    <property type="match status" value="1"/>
</dbReference>
<dbReference type="Pfam" id="PF01641">
    <property type="entry name" value="SelR"/>
    <property type="match status" value="1"/>
</dbReference>
<dbReference type="SUPFAM" id="SSF51316">
    <property type="entry name" value="Mss4-like"/>
    <property type="match status" value="1"/>
</dbReference>
<dbReference type="PROSITE" id="PS51790">
    <property type="entry name" value="MSRB"/>
    <property type="match status" value="1"/>
</dbReference>
<name>MSRB_ECOLI</name>
<proteinExistence type="evidence at protein level"/>
<organism>
    <name type="scientific">Escherichia coli (strain K12)</name>
    <dbReference type="NCBI Taxonomy" id="83333"/>
    <lineage>
        <taxon>Bacteria</taxon>
        <taxon>Pseudomonadati</taxon>
        <taxon>Pseudomonadota</taxon>
        <taxon>Gammaproteobacteria</taxon>
        <taxon>Enterobacterales</taxon>
        <taxon>Enterobacteriaceae</taxon>
        <taxon>Escherichia</taxon>
    </lineage>
</organism>
<sequence>MANKPSAEELKKNLSEMQFYVTQNHGTEPPFTGRLLHNKRDGVYHCLICDAPLFHSQTKYDSGCGWPSFYEPVSEESIRYIKDLSHGMQRIEIRCGNCDAHLGHVFPDGPQPTGERYCVNSASLRFTDGENGEEING</sequence>
<evidence type="ECO:0000255" key="1">
    <source>
        <dbReference type="PROSITE-ProRule" id="PRU01126"/>
    </source>
</evidence>
<evidence type="ECO:0000269" key="2">
    <source>
    </source>
</evidence>
<evidence type="ECO:0000305" key="3"/>
<evidence type="ECO:0007829" key="4">
    <source>
        <dbReference type="PDB" id="6SYM"/>
    </source>
</evidence>
<keyword id="KW-0002">3D-structure</keyword>
<keyword id="KW-0479">Metal-binding</keyword>
<keyword id="KW-0560">Oxidoreductase</keyword>
<keyword id="KW-1185">Reference proteome</keyword>
<keyword id="KW-0862">Zinc</keyword>
<feature type="initiator methionine" description="Removed">
    <location>
        <position position="1"/>
    </location>
</feature>
<feature type="chain" id="PRO_0000140271" description="Peptide methionine sulfoxide reductase MsrB">
    <location>
        <begin position="2"/>
        <end position="137"/>
    </location>
</feature>
<feature type="domain" description="MsrB" evidence="1">
    <location>
        <begin position="7"/>
        <end position="129"/>
    </location>
</feature>
<feature type="active site" description="Nucleophile" evidence="1">
    <location>
        <position position="118"/>
    </location>
</feature>
<feature type="binding site" evidence="1">
    <location>
        <position position="46"/>
    </location>
    <ligand>
        <name>Zn(2+)</name>
        <dbReference type="ChEBI" id="CHEBI:29105"/>
    </ligand>
</feature>
<feature type="binding site" evidence="1">
    <location>
        <position position="49"/>
    </location>
    <ligand>
        <name>Zn(2+)</name>
        <dbReference type="ChEBI" id="CHEBI:29105"/>
    </ligand>
</feature>
<feature type="binding site" evidence="1">
    <location>
        <position position="95"/>
    </location>
    <ligand>
        <name>Zn(2+)</name>
        <dbReference type="ChEBI" id="CHEBI:29105"/>
    </ligand>
</feature>
<feature type="binding site" evidence="1">
    <location>
        <position position="98"/>
    </location>
    <ligand>
        <name>Zn(2+)</name>
        <dbReference type="ChEBI" id="CHEBI:29105"/>
    </ligand>
</feature>
<feature type="mutagenesis site" description="Loss of activity; when associated with S-49; S-95 and S-98." evidence="2">
    <original>C</original>
    <variation>D</variation>
    <location>
        <position position="46"/>
    </location>
</feature>
<feature type="mutagenesis site" description="Loss of activity; when associated with S-46; S-95 and S-98." evidence="2">
    <original>C</original>
    <variation>S</variation>
    <location>
        <position position="49"/>
    </location>
</feature>
<feature type="mutagenesis site" description="Loss of activity; when associated with S-46; S-49 and S-98." evidence="2">
    <original>C</original>
    <variation>S</variation>
    <location>
        <position position="95"/>
    </location>
</feature>
<feature type="mutagenesis site" description="Loss of activity; when associated with S-46; S-49 and S-95." evidence="2">
    <original>C</original>
    <variation>S</variation>
    <location>
        <position position="98"/>
    </location>
</feature>
<feature type="helix" evidence="4">
    <location>
        <begin position="7"/>
        <end position="13"/>
    </location>
</feature>
<feature type="helix" evidence="4">
    <location>
        <begin position="16"/>
        <end position="24"/>
    </location>
</feature>
<feature type="turn" evidence="4">
    <location>
        <begin position="34"/>
        <end position="37"/>
    </location>
</feature>
<feature type="strand" evidence="4">
    <location>
        <begin position="40"/>
        <end position="46"/>
    </location>
</feature>
<feature type="turn" evidence="4">
    <location>
        <begin position="47"/>
        <end position="49"/>
    </location>
</feature>
<feature type="strand" evidence="4">
    <location>
        <begin position="52"/>
        <end position="55"/>
    </location>
</feature>
<feature type="helix" evidence="4">
    <location>
        <begin position="56"/>
        <end position="58"/>
    </location>
</feature>
<feature type="strand" evidence="4">
    <location>
        <begin position="63"/>
        <end position="66"/>
    </location>
</feature>
<feature type="strand" evidence="4">
    <location>
        <begin position="68"/>
        <end position="70"/>
    </location>
</feature>
<feature type="helix" evidence="4">
    <location>
        <begin position="75"/>
        <end position="77"/>
    </location>
</feature>
<feature type="strand" evidence="4">
    <location>
        <begin position="78"/>
        <end position="83"/>
    </location>
</feature>
<feature type="helix" evidence="4">
    <location>
        <begin position="85"/>
        <end position="87"/>
    </location>
</feature>
<feature type="strand" evidence="4">
    <location>
        <begin position="90"/>
        <end position="95"/>
    </location>
</feature>
<feature type="turn" evidence="4">
    <location>
        <begin position="96"/>
        <end position="98"/>
    </location>
</feature>
<feature type="strand" evidence="4">
    <location>
        <begin position="101"/>
        <end position="107"/>
    </location>
</feature>
<feature type="turn" evidence="4">
    <location>
        <begin position="111"/>
        <end position="114"/>
    </location>
</feature>
<feature type="strand" evidence="4">
    <location>
        <begin position="116"/>
        <end position="119"/>
    </location>
</feature>
<feature type="helix" evidence="4">
    <location>
        <begin position="121"/>
        <end position="123"/>
    </location>
</feature>
<feature type="strand" evidence="4">
    <location>
        <begin position="124"/>
        <end position="128"/>
    </location>
</feature>
<feature type="turn" evidence="4">
    <location>
        <begin position="129"/>
        <end position="131"/>
    </location>
</feature>
<feature type="strand" evidence="4">
    <location>
        <begin position="134"/>
        <end position="136"/>
    </location>
</feature>